<keyword id="KW-0238">DNA-binding</keyword>
<keyword id="KW-1185">Reference proteome</keyword>
<keyword id="KW-0731">Sigma factor</keyword>
<keyword id="KW-0804">Transcription</keyword>
<keyword id="KW-0805">Transcription regulation</keyword>
<accession>P9WGH3</accession>
<accession>L7N4U5</accession>
<proteinExistence type="evidence at transcript level"/>
<sequence length="290" mass="31431">MSQHDPVSAAWRAHRAYLVDLAFRMVGDIGVAEDMVQEAFSRLLRAPVGDIDDERGWLIVVTSRLCLDHIKSASTRRERPQDIAAWHDGDASVSSVDPADRVTLDDEVRLALLIMLERLGPAERVVFVLHEIFGLPYQQIATTIGSQASTCRQLAHRARRKINESRIAASVEPAQHRVVTRAFIEACSNGDLDTLLEVLDPGVAGEIDARKGVVVVGADRVGPTILRHWSHPATVLVAQPVCGQPAVLAFVNRALAGVLALSIEAGKITKIHVLVQPSTLDPLRAELGGG</sequence>
<reference key="1">
    <citation type="journal article" date="1998" name="Nature">
        <title>Deciphering the biology of Mycobacterium tuberculosis from the complete genome sequence.</title>
        <authorList>
            <person name="Cole S.T."/>
            <person name="Brosch R."/>
            <person name="Parkhill J."/>
            <person name="Garnier T."/>
            <person name="Churcher C.M."/>
            <person name="Harris D.E."/>
            <person name="Gordon S.V."/>
            <person name="Eiglmeier K."/>
            <person name="Gas S."/>
            <person name="Barry C.E. III"/>
            <person name="Tekaia F."/>
            <person name="Badcock K."/>
            <person name="Basham D."/>
            <person name="Brown D."/>
            <person name="Chillingworth T."/>
            <person name="Connor R."/>
            <person name="Davies R.M."/>
            <person name="Devlin K."/>
            <person name="Feltwell T."/>
            <person name="Gentles S."/>
            <person name="Hamlin N."/>
            <person name="Holroyd S."/>
            <person name="Hornsby T."/>
            <person name="Jagels K."/>
            <person name="Krogh A."/>
            <person name="McLean J."/>
            <person name="Moule S."/>
            <person name="Murphy L.D."/>
            <person name="Oliver S."/>
            <person name="Osborne J."/>
            <person name="Quail M.A."/>
            <person name="Rajandream M.A."/>
            <person name="Rogers J."/>
            <person name="Rutter S."/>
            <person name="Seeger K."/>
            <person name="Skelton S."/>
            <person name="Squares S."/>
            <person name="Squares R."/>
            <person name="Sulston J.E."/>
            <person name="Taylor K."/>
            <person name="Whitehead S."/>
            <person name="Barrell B.G."/>
        </authorList>
    </citation>
    <scope>NUCLEOTIDE SEQUENCE [LARGE SCALE GENOMIC DNA]</scope>
    <source>
        <strain>ATCC 25618 / H37Rv</strain>
    </source>
</reference>
<reference key="2">
    <citation type="journal article" date="1999" name="Mol. Microbiol.">
        <title>Differential expression of 10 sigma factor genes in Mycobacterium tuberculosis.</title>
        <authorList>
            <person name="Manganelli R."/>
            <person name="Dubnau E."/>
            <person name="Tyagi S."/>
            <person name="Kramer F.R."/>
            <person name="Smith I."/>
        </authorList>
    </citation>
    <scope>INDUCTION</scope>
    <source>
        <strain>ATCC 25618 / H37Rv</strain>
    </source>
</reference>
<reference key="3">
    <citation type="journal article" date="2008" name="FEMS Microbiol. Lett.">
        <title>Cascade of extracytoplasmic function sigma factors in Mycobacterium tuberculosis: identification of a sigmaJ-dependent promoter upstream of sigI.</title>
        <authorList>
            <person name="Homerova D."/>
            <person name="Halgasova L."/>
            <person name="Kormanec J."/>
        </authorList>
    </citation>
    <scope>INDUCTION BY SIGJ</scope>
    <source>
        <strain>ATCC 25618 / H37Rv</strain>
    </source>
</reference>
<gene>
    <name type="primary">sigI</name>
    <name type="ordered locus">Rv1189</name>
</gene>
<feature type="chain" id="PRO_0000423647" description="Probable ECF RNA polymerase sigma factor SigI">
    <location>
        <begin position="1"/>
        <end position="290"/>
    </location>
</feature>
<feature type="DNA-binding region" description="H-T-H motif" evidence="1">
    <location>
        <begin position="137"/>
        <end position="156"/>
    </location>
</feature>
<feature type="region of interest" description="Sigma-70 factor domain-2">
    <location>
        <begin position="11"/>
        <end position="74"/>
    </location>
</feature>
<feature type="region of interest" description="Sigma-70 factor domain-4_2">
    <location>
        <begin position="110"/>
        <end position="162"/>
    </location>
</feature>
<feature type="short sequence motif" description="Polymerase core binding" evidence="2">
    <location>
        <begin position="34"/>
        <end position="37"/>
    </location>
</feature>
<dbReference type="EMBL" id="AL123456">
    <property type="protein sequence ID" value="CCP43945.1"/>
    <property type="molecule type" value="Genomic_DNA"/>
</dbReference>
<dbReference type="PIR" id="E70877">
    <property type="entry name" value="E70877"/>
</dbReference>
<dbReference type="RefSeq" id="NP_215705.1">
    <property type="nucleotide sequence ID" value="NC_000962.3"/>
</dbReference>
<dbReference type="RefSeq" id="WP_003406207.1">
    <property type="nucleotide sequence ID" value="NZ_NVQJ01000025.1"/>
</dbReference>
<dbReference type="SMR" id="P9WGH3"/>
<dbReference type="STRING" id="83332.Rv1189"/>
<dbReference type="PaxDb" id="83332-Rv1189"/>
<dbReference type="DNASU" id="886079"/>
<dbReference type="GeneID" id="886079"/>
<dbReference type="KEGG" id="mtu:Rv1189"/>
<dbReference type="KEGG" id="mtv:RVBD_1189"/>
<dbReference type="TubercuList" id="Rv1189"/>
<dbReference type="eggNOG" id="COG1595">
    <property type="taxonomic scope" value="Bacteria"/>
</dbReference>
<dbReference type="InParanoid" id="P9WGH3"/>
<dbReference type="OrthoDB" id="3211555at2"/>
<dbReference type="PhylomeDB" id="P9WGH3"/>
<dbReference type="Proteomes" id="UP000001584">
    <property type="component" value="Chromosome"/>
</dbReference>
<dbReference type="GO" id="GO:0003677">
    <property type="term" value="F:DNA binding"/>
    <property type="evidence" value="ECO:0007669"/>
    <property type="project" value="UniProtKB-KW"/>
</dbReference>
<dbReference type="GO" id="GO:0016987">
    <property type="term" value="F:sigma factor activity"/>
    <property type="evidence" value="ECO:0000318"/>
    <property type="project" value="GO_Central"/>
</dbReference>
<dbReference type="GO" id="GO:0006352">
    <property type="term" value="P:DNA-templated transcription initiation"/>
    <property type="evidence" value="ECO:0007669"/>
    <property type="project" value="InterPro"/>
</dbReference>
<dbReference type="GO" id="GO:0009409">
    <property type="term" value="P:response to cold"/>
    <property type="evidence" value="ECO:0000270"/>
    <property type="project" value="MTBBASE"/>
</dbReference>
<dbReference type="Gene3D" id="1.10.1740.10">
    <property type="match status" value="1"/>
</dbReference>
<dbReference type="Gene3D" id="1.10.10.10">
    <property type="entry name" value="Winged helix-like DNA-binding domain superfamily/Winged helix DNA-binding domain"/>
    <property type="match status" value="1"/>
</dbReference>
<dbReference type="InterPro" id="IPR052704">
    <property type="entry name" value="ECF_Sigma-70_Domain"/>
</dbReference>
<dbReference type="InterPro" id="IPR032710">
    <property type="entry name" value="NTF2-like_dom_sf"/>
</dbReference>
<dbReference type="InterPro" id="IPR014284">
    <property type="entry name" value="RNA_pol_sigma-70_dom"/>
</dbReference>
<dbReference type="InterPro" id="IPR007627">
    <property type="entry name" value="RNA_pol_sigma70_r2"/>
</dbReference>
<dbReference type="InterPro" id="IPR013249">
    <property type="entry name" value="RNA_pol_sigma70_r4_t2"/>
</dbReference>
<dbReference type="InterPro" id="IPR013325">
    <property type="entry name" value="RNA_pol_sigma_r2"/>
</dbReference>
<dbReference type="InterPro" id="IPR013324">
    <property type="entry name" value="RNA_pol_sigma_r3/r4-like"/>
</dbReference>
<dbReference type="InterPro" id="IPR036388">
    <property type="entry name" value="WH-like_DNA-bd_sf"/>
</dbReference>
<dbReference type="NCBIfam" id="NF007213">
    <property type="entry name" value="PRK09635.1"/>
    <property type="match status" value="1"/>
</dbReference>
<dbReference type="NCBIfam" id="TIGR02937">
    <property type="entry name" value="sigma70-ECF"/>
    <property type="match status" value="1"/>
</dbReference>
<dbReference type="PANTHER" id="PTHR30173:SF43">
    <property type="entry name" value="ECF RNA POLYMERASE SIGMA FACTOR SIGI-RELATED"/>
    <property type="match status" value="1"/>
</dbReference>
<dbReference type="PANTHER" id="PTHR30173">
    <property type="entry name" value="SIGMA 19 FACTOR"/>
    <property type="match status" value="1"/>
</dbReference>
<dbReference type="Pfam" id="PF04542">
    <property type="entry name" value="Sigma70_r2"/>
    <property type="match status" value="1"/>
</dbReference>
<dbReference type="Pfam" id="PF08281">
    <property type="entry name" value="Sigma70_r4_2"/>
    <property type="match status" value="1"/>
</dbReference>
<dbReference type="SUPFAM" id="SSF54427">
    <property type="entry name" value="NTF2-like"/>
    <property type="match status" value="1"/>
</dbReference>
<dbReference type="SUPFAM" id="SSF88946">
    <property type="entry name" value="Sigma2 domain of RNA polymerase sigma factors"/>
    <property type="match status" value="1"/>
</dbReference>
<dbReference type="SUPFAM" id="SSF88659">
    <property type="entry name" value="Sigma3 and sigma4 domains of RNA polymerase sigma factors"/>
    <property type="match status" value="1"/>
</dbReference>
<evidence type="ECO:0000250" key="1"/>
<evidence type="ECO:0000255" key="2"/>
<evidence type="ECO:0000269" key="3">
    <source>
    </source>
</evidence>
<evidence type="ECO:0000269" key="4">
    <source>
    </source>
</evidence>
<evidence type="ECO:0000305" key="5"/>
<comment type="function">
    <text evidence="1">Sigma factors are initiation factors that promote the attachment of RNA polymerase to specific initiation sites and are then released. Extracytoplasmic function (ECF) sigma factors are held in an inactive form by a cognate anti-sigma factor until released, although no anti-sigma factor is known for this protein (By similarity).</text>
</comment>
<comment type="subunit">
    <text evidence="1">Interacts transiently with the RNA polymerase catalytic core formed by RpoA, RpoB, RpoC and RpoZ (2 alpha, 1 beta, 1 beta' and 1 omega subunit) to form the RNA polymerase holoenzyme that can initiate transcription.</text>
</comment>
<comment type="induction">
    <text evidence="3 4">Constitutively expressed at a low level under all conditions tested. Transcribed under control of SigJ.</text>
</comment>
<comment type="domain">
    <text evidence="1">The sigma-70 factor domain-2 mediates sequence-specific interaction with the -10 element in promoter DNA, and plays an important role in melting the double-stranded DNA and the formation of the transcription bubble. The sigma-70 factor domain-2 mediates interaction with the RNA polymerase subunits RpoB and RpoC (By similarity).</text>
</comment>
<comment type="domain">
    <text evidence="1">The sigma-70 factor domain-4 contains a helix-turn-helix (H-T-H) motif that mediates interaction with the -35 element in promoter DNA. The domain also mediates interaction with the RNA polymerase subunit RpoA (By similarity).</text>
</comment>
<comment type="similarity">
    <text evidence="5">Belongs to the sigma-70 factor family. ECF subfamily.</text>
</comment>
<protein>
    <recommendedName>
        <fullName>Probable ECF RNA polymerase sigma factor SigI</fullName>
        <shortName>ECF sigma factor SigI</shortName>
    </recommendedName>
    <alternativeName>
        <fullName>Alternative RNA polymerase sigma factor SigI</fullName>
    </alternativeName>
    <alternativeName>
        <fullName>RNA polymerase sigma-I factor</fullName>
        <shortName>Sigma-I factor</shortName>
    </alternativeName>
</protein>
<organism>
    <name type="scientific">Mycobacterium tuberculosis (strain ATCC 25618 / H37Rv)</name>
    <dbReference type="NCBI Taxonomy" id="83332"/>
    <lineage>
        <taxon>Bacteria</taxon>
        <taxon>Bacillati</taxon>
        <taxon>Actinomycetota</taxon>
        <taxon>Actinomycetes</taxon>
        <taxon>Mycobacteriales</taxon>
        <taxon>Mycobacteriaceae</taxon>
        <taxon>Mycobacterium</taxon>
        <taxon>Mycobacterium tuberculosis complex</taxon>
    </lineage>
</organism>
<name>SIGI_MYCTU</name>